<gene>
    <name type="primary">mpp7</name>
</gene>
<evidence type="ECO:0000250" key="1"/>
<evidence type="ECO:0000255" key="2">
    <source>
        <dbReference type="PROSITE-ProRule" id="PRU00100"/>
    </source>
</evidence>
<evidence type="ECO:0000255" key="3">
    <source>
        <dbReference type="PROSITE-ProRule" id="PRU00143"/>
    </source>
</evidence>
<evidence type="ECO:0000255" key="4">
    <source>
        <dbReference type="PROSITE-ProRule" id="PRU00192"/>
    </source>
</evidence>
<evidence type="ECO:0000255" key="5">
    <source>
        <dbReference type="PROSITE-ProRule" id="PRU00365"/>
    </source>
</evidence>
<evidence type="ECO:0000305" key="6"/>
<sequence>MPALSTGAGSDTGLYEILATLPAQLQPHVDSQEDLTFLWDMFGEKSLHSLVKIHEKLHYYEKENPMPVIHSATALAEELAEELQSKSLNSEIRELLKLLSKPNLKALLSVHDTVAQKSYDPVLPPMPDDIDDDEDSVKIIRLVKNREPLGATIKKDEKTGAIVVARIMRGGAADRSGLIHVGDELREVNGISVEDKKPEEIIHILAQSQGAITFKIIPSIKEEPPNNDGKMFVKALFDYYPNEDKAIPCKEAGLSFRKGDILQIMSQDDATWWQAKHEGDANPRAGLIPSKQFQERRFALRKPVVSNQPQKVPNRKSSGFRRSFRLSRKDRKTNKFMYECKKSDQYDTADVPTYEEVALYQRKPNEKYRLVILVGPVGVGVNELKRKVLIGNSQHYGVTVPHTTRGKRSQENDGVEYIFISKHLFETDIHNNKFIEYGEYKNNYYGTSLDSVRSVLAKNKICLLDVQPNSLKHLRTSEFKPFVIFIKPPTIERLRETRRNAKVISGKDERGAAKPFSDEDFEEMIQSAEAMEAQYDHFFDTTIVNDDLSAAYNELRSTLERLEMEGFWVPVSWLHS</sequence>
<dbReference type="EMBL" id="BC154093">
    <property type="protein sequence ID" value="AAI54094.1"/>
    <property type="molecule type" value="mRNA"/>
</dbReference>
<dbReference type="RefSeq" id="NP_001106472.1">
    <property type="nucleotide sequence ID" value="NM_001113001.1"/>
</dbReference>
<dbReference type="SMR" id="A8KBF6"/>
<dbReference type="FunCoup" id="A8KBF6">
    <property type="interactions" value="662"/>
</dbReference>
<dbReference type="STRING" id="8364.ENSXETP00000044709"/>
<dbReference type="PaxDb" id="8364-ENSXETP00000009873"/>
<dbReference type="ABCD" id="A8KBF6">
    <property type="antibodies" value="1 sequenced antibody"/>
</dbReference>
<dbReference type="GeneID" id="100127657"/>
<dbReference type="KEGG" id="xtr:100127657"/>
<dbReference type="AGR" id="Xenbase:XB-GENE-950404"/>
<dbReference type="CTD" id="143098"/>
<dbReference type="Xenbase" id="XB-GENE-950404">
    <property type="gene designation" value="mpp7"/>
</dbReference>
<dbReference type="eggNOG" id="KOG0609">
    <property type="taxonomic scope" value="Eukaryota"/>
</dbReference>
<dbReference type="HOGENOM" id="CLU_001715_5_0_1"/>
<dbReference type="InParanoid" id="A8KBF6"/>
<dbReference type="OrthoDB" id="439127at2759"/>
<dbReference type="TreeFam" id="TF314263"/>
<dbReference type="Reactome" id="R-XTR-9013149">
    <property type="pathway name" value="RAC1 GTPase cycle"/>
</dbReference>
<dbReference type="Reactome" id="R-XTR-9013404">
    <property type="pathway name" value="RAC2 GTPase cycle"/>
</dbReference>
<dbReference type="Reactome" id="R-XTR-9013406">
    <property type="pathway name" value="RHOQ GTPase cycle"/>
</dbReference>
<dbReference type="Reactome" id="R-XTR-9013408">
    <property type="pathway name" value="RHOG GTPase cycle"/>
</dbReference>
<dbReference type="Reactome" id="R-XTR-9013423">
    <property type="pathway name" value="RAC3 GTPase cycle"/>
</dbReference>
<dbReference type="Proteomes" id="UP000008143">
    <property type="component" value="Chromosome 6"/>
</dbReference>
<dbReference type="Bgee" id="ENSXETG00000004546">
    <property type="expression patterns" value="Expressed in skeletal muscle tissue and 12 other cell types or tissues"/>
</dbReference>
<dbReference type="GO" id="GO:0005912">
    <property type="term" value="C:adherens junction"/>
    <property type="evidence" value="ECO:0007669"/>
    <property type="project" value="UniProtKB-SubCell"/>
</dbReference>
<dbReference type="GO" id="GO:0005923">
    <property type="term" value="C:bicellular tight junction"/>
    <property type="evidence" value="ECO:0007669"/>
    <property type="project" value="UniProtKB-SubCell"/>
</dbReference>
<dbReference type="GO" id="GO:0016020">
    <property type="term" value="C:membrane"/>
    <property type="evidence" value="ECO:0007669"/>
    <property type="project" value="UniProtKB-SubCell"/>
</dbReference>
<dbReference type="CDD" id="cd00071">
    <property type="entry name" value="GMPK"/>
    <property type="match status" value="1"/>
</dbReference>
<dbReference type="CDD" id="cd06799">
    <property type="entry name" value="PDZ_MPP3-MPP4-MPP7-like"/>
    <property type="match status" value="1"/>
</dbReference>
<dbReference type="CDD" id="cd12033">
    <property type="entry name" value="SH3_MPP7"/>
    <property type="match status" value="1"/>
</dbReference>
<dbReference type="FunFam" id="3.30.63.10:FF:000002">
    <property type="entry name" value="Guanylate kinase 1"/>
    <property type="match status" value="1"/>
</dbReference>
<dbReference type="FunFam" id="2.30.42.10:FF:000046">
    <property type="entry name" value="MAGUK p55 subfamily member 7"/>
    <property type="match status" value="1"/>
</dbReference>
<dbReference type="Gene3D" id="2.30.42.10">
    <property type="match status" value="1"/>
</dbReference>
<dbReference type="Gene3D" id="1.10.287.650">
    <property type="entry name" value="L27 domain"/>
    <property type="match status" value="1"/>
</dbReference>
<dbReference type="Gene3D" id="3.40.50.300">
    <property type="entry name" value="P-loop containing nucleotide triphosphate hydrolases"/>
    <property type="match status" value="1"/>
</dbReference>
<dbReference type="Gene3D" id="2.30.30.40">
    <property type="entry name" value="SH3 Domains"/>
    <property type="match status" value="1"/>
</dbReference>
<dbReference type="InterPro" id="IPR008145">
    <property type="entry name" value="GK/Ca_channel_bsu"/>
</dbReference>
<dbReference type="InterPro" id="IPR008144">
    <property type="entry name" value="Guanylate_kin-like_dom"/>
</dbReference>
<dbReference type="InterPro" id="IPR020590">
    <property type="entry name" value="Guanylate_kinase_CS"/>
</dbReference>
<dbReference type="InterPro" id="IPR014775">
    <property type="entry name" value="L27_C"/>
</dbReference>
<dbReference type="InterPro" id="IPR004172">
    <property type="entry name" value="L27_dom"/>
</dbReference>
<dbReference type="InterPro" id="IPR036892">
    <property type="entry name" value="L27_dom_sf"/>
</dbReference>
<dbReference type="InterPro" id="IPR050716">
    <property type="entry name" value="MAGUK"/>
</dbReference>
<dbReference type="InterPro" id="IPR035599">
    <property type="entry name" value="MPP7_SH3"/>
</dbReference>
<dbReference type="InterPro" id="IPR027417">
    <property type="entry name" value="P-loop_NTPase"/>
</dbReference>
<dbReference type="InterPro" id="IPR001478">
    <property type="entry name" value="PDZ"/>
</dbReference>
<dbReference type="InterPro" id="IPR036034">
    <property type="entry name" value="PDZ_sf"/>
</dbReference>
<dbReference type="InterPro" id="IPR036028">
    <property type="entry name" value="SH3-like_dom_sf"/>
</dbReference>
<dbReference type="InterPro" id="IPR001452">
    <property type="entry name" value="SH3_domain"/>
</dbReference>
<dbReference type="PANTHER" id="PTHR23122">
    <property type="entry name" value="MEMBRANE-ASSOCIATED GUANYLATE KINASE MAGUK"/>
    <property type="match status" value="1"/>
</dbReference>
<dbReference type="Pfam" id="PF00625">
    <property type="entry name" value="Guanylate_kin"/>
    <property type="match status" value="1"/>
</dbReference>
<dbReference type="Pfam" id="PF02828">
    <property type="entry name" value="L27"/>
    <property type="match status" value="2"/>
</dbReference>
<dbReference type="Pfam" id="PF00595">
    <property type="entry name" value="PDZ"/>
    <property type="match status" value="1"/>
</dbReference>
<dbReference type="Pfam" id="PF00018">
    <property type="entry name" value="SH3_1"/>
    <property type="match status" value="1"/>
</dbReference>
<dbReference type="SMART" id="SM00072">
    <property type="entry name" value="GuKc"/>
    <property type="match status" value="1"/>
</dbReference>
<dbReference type="SMART" id="SM00569">
    <property type="entry name" value="L27"/>
    <property type="match status" value="2"/>
</dbReference>
<dbReference type="SMART" id="SM00228">
    <property type="entry name" value="PDZ"/>
    <property type="match status" value="1"/>
</dbReference>
<dbReference type="SMART" id="SM00326">
    <property type="entry name" value="SH3"/>
    <property type="match status" value="1"/>
</dbReference>
<dbReference type="SUPFAM" id="SSF101288">
    <property type="entry name" value="L27 domain"/>
    <property type="match status" value="1"/>
</dbReference>
<dbReference type="SUPFAM" id="SSF52540">
    <property type="entry name" value="P-loop containing nucleoside triphosphate hydrolases"/>
    <property type="match status" value="1"/>
</dbReference>
<dbReference type="SUPFAM" id="SSF50156">
    <property type="entry name" value="PDZ domain-like"/>
    <property type="match status" value="1"/>
</dbReference>
<dbReference type="SUPFAM" id="SSF50044">
    <property type="entry name" value="SH3-domain"/>
    <property type="match status" value="1"/>
</dbReference>
<dbReference type="PROSITE" id="PS00856">
    <property type="entry name" value="GUANYLATE_KINASE_1"/>
    <property type="match status" value="1"/>
</dbReference>
<dbReference type="PROSITE" id="PS50052">
    <property type="entry name" value="GUANYLATE_KINASE_2"/>
    <property type="match status" value="1"/>
</dbReference>
<dbReference type="PROSITE" id="PS51022">
    <property type="entry name" value="L27"/>
    <property type="match status" value="2"/>
</dbReference>
<dbReference type="PROSITE" id="PS50106">
    <property type="entry name" value="PDZ"/>
    <property type="match status" value="1"/>
</dbReference>
<dbReference type="PROSITE" id="PS50002">
    <property type="entry name" value="SH3"/>
    <property type="match status" value="1"/>
</dbReference>
<keyword id="KW-0965">Cell junction</keyword>
<keyword id="KW-0472">Membrane</keyword>
<keyword id="KW-1185">Reference proteome</keyword>
<keyword id="KW-0677">Repeat</keyword>
<keyword id="KW-0728">SH3 domain</keyword>
<keyword id="KW-0796">Tight junction</keyword>
<comment type="function">
    <text evidence="1">Acts as an important adapter that promotes epithelial cell polarity and tight junction formation. Involved in the assembly of protein complexes at sites of cell-cell contact (By similarity).</text>
</comment>
<comment type="subcellular location">
    <subcellularLocation>
        <location evidence="1">Membrane</location>
        <topology evidence="1">Peripheral membrane protein</topology>
    </subcellularLocation>
    <subcellularLocation>
        <location evidence="1">Cell junction</location>
        <location evidence="1">Tight junction</location>
    </subcellularLocation>
    <subcellularLocation>
        <location evidence="1">Cell junction</location>
        <location evidence="1">Adherens junction</location>
    </subcellularLocation>
</comment>
<comment type="similarity">
    <text evidence="6">Belongs to the MAGUK family.</text>
</comment>
<feature type="chain" id="PRO_0000320031" description="MAGUK p55 subfamily member 7">
    <location>
        <begin position="1"/>
        <end position="576"/>
    </location>
</feature>
<feature type="domain" description="L27 1" evidence="5">
    <location>
        <begin position="10"/>
        <end position="63"/>
    </location>
</feature>
<feature type="domain" description="L27 2" evidence="5">
    <location>
        <begin position="65"/>
        <end position="122"/>
    </location>
</feature>
<feature type="domain" description="PDZ" evidence="3">
    <location>
        <begin position="139"/>
        <end position="220"/>
    </location>
</feature>
<feature type="domain" description="SH3" evidence="4">
    <location>
        <begin position="228"/>
        <end position="298"/>
    </location>
</feature>
<feature type="domain" description="Guanylate kinase-like" evidence="2">
    <location>
        <begin position="368"/>
        <end position="560"/>
    </location>
</feature>
<name>MPP7_XENTR</name>
<proteinExistence type="evidence at transcript level"/>
<accession>A8KBF6</accession>
<protein>
    <recommendedName>
        <fullName>MAGUK p55 subfamily member 7</fullName>
    </recommendedName>
</protein>
<reference key="1">
    <citation type="submission" date="2007-10" db="EMBL/GenBank/DDBJ databases">
        <authorList>
            <consortium name="NIH - Xenopus Gene Collection (XGC) project"/>
        </authorList>
    </citation>
    <scope>NUCLEOTIDE SEQUENCE [LARGE SCALE MRNA]</scope>
    <source>
        <tissue>Testis</tissue>
    </source>
</reference>
<organism>
    <name type="scientific">Xenopus tropicalis</name>
    <name type="common">Western clawed frog</name>
    <name type="synonym">Silurana tropicalis</name>
    <dbReference type="NCBI Taxonomy" id="8364"/>
    <lineage>
        <taxon>Eukaryota</taxon>
        <taxon>Metazoa</taxon>
        <taxon>Chordata</taxon>
        <taxon>Craniata</taxon>
        <taxon>Vertebrata</taxon>
        <taxon>Euteleostomi</taxon>
        <taxon>Amphibia</taxon>
        <taxon>Batrachia</taxon>
        <taxon>Anura</taxon>
        <taxon>Pipoidea</taxon>
        <taxon>Pipidae</taxon>
        <taxon>Xenopodinae</taxon>
        <taxon>Xenopus</taxon>
        <taxon>Silurana</taxon>
    </lineage>
</organism>